<protein>
    <recommendedName>
        <fullName evidence="1">tRNA (guanine-N(7)-)-methyltransferase</fullName>
        <ecNumber evidence="1">2.1.1.33</ecNumber>
    </recommendedName>
    <alternativeName>
        <fullName evidence="1">Transfer RNA methyltransferase 8</fullName>
    </alternativeName>
    <alternativeName>
        <fullName evidence="1">tRNA (guanine(46)-N(7))-methyltransferase</fullName>
    </alternativeName>
    <alternativeName>
        <fullName evidence="1">tRNA(m7G46)-methyltransferase</fullName>
    </alternativeName>
</protein>
<sequence>MPKPHQVQVIKDRETQLREQQEAESKRRTYRDVKEETRKKHKKAHFEASPTPEESTSDKISLPRKRYYRQRAHSNPFSDHRLEYPRSPDDMNWEKLFPGFYDEETKQMTSSVEIADVGCGYGGLLTKLAPEFPNSLILGMEIRVQVTQYVEDRIIALRNKHEDEDVNFQNIAVLRGNAMKFLPNFFRKGQLSKMFFCFPDPHFKQRKHKARIITNTLLSEYAYVLKEGGVVYTITDVEDLHNWMVKHLEEHPLFERLSKEWEEQDTCVSIMFNSTEEGQKVTRNKGSKWIACYRRLPNPEECV</sequence>
<reference key="1">
    <citation type="journal article" date="2007" name="Nat. Biotechnol.">
        <title>Genome sequence of the lignocellulose-bioconverting and xylose-fermenting yeast Pichia stipitis.</title>
        <authorList>
            <person name="Jeffries T.W."/>
            <person name="Grigoriev I.V."/>
            <person name="Grimwood J."/>
            <person name="Laplaza J.M."/>
            <person name="Aerts A."/>
            <person name="Salamov A."/>
            <person name="Schmutz J."/>
            <person name="Lindquist E."/>
            <person name="Dehal P."/>
            <person name="Shapiro H."/>
            <person name="Jin Y.-S."/>
            <person name="Passoth V."/>
            <person name="Richardson P.M."/>
        </authorList>
    </citation>
    <scope>NUCLEOTIDE SEQUENCE [LARGE SCALE GENOMIC DNA]</scope>
    <source>
        <strain>ATCC 58785 / CBS 6054 / NBRC 10063 / NRRL Y-11545</strain>
    </source>
</reference>
<accession>A3LS77</accession>
<name>TRMB_PICST</name>
<proteinExistence type="inferred from homology"/>
<keyword id="KW-0489">Methyltransferase</keyword>
<keyword id="KW-0539">Nucleus</keyword>
<keyword id="KW-1185">Reference proteome</keyword>
<keyword id="KW-0694">RNA-binding</keyword>
<keyword id="KW-0949">S-adenosyl-L-methionine</keyword>
<keyword id="KW-0808">Transferase</keyword>
<keyword id="KW-0819">tRNA processing</keyword>
<keyword id="KW-0820">tRNA-binding</keyword>
<organism>
    <name type="scientific">Scheffersomyces stipitis (strain ATCC 58785 / CBS 6054 / NBRC 10063 / NRRL Y-11545)</name>
    <name type="common">Yeast</name>
    <name type="synonym">Pichia stipitis</name>
    <dbReference type="NCBI Taxonomy" id="322104"/>
    <lineage>
        <taxon>Eukaryota</taxon>
        <taxon>Fungi</taxon>
        <taxon>Dikarya</taxon>
        <taxon>Ascomycota</taxon>
        <taxon>Saccharomycotina</taxon>
        <taxon>Pichiomycetes</taxon>
        <taxon>Debaryomycetaceae</taxon>
        <taxon>Scheffersomyces</taxon>
    </lineage>
</organism>
<feature type="chain" id="PRO_0000370603" description="tRNA (guanine-N(7)-)-methyltransferase">
    <location>
        <begin position="1"/>
        <end position="303"/>
    </location>
</feature>
<feature type="region of interest" description="Disordered" evidence="2">
    <location>
        <begin position="1"/>
        <end position="64"/>
    </location>
</feature>
<feature type="compositionally biased region" description="Basic and acidic residues" evidence="2">
    <location>
        <begin position="10"/>
        <end position="38"/>
    </location>
</feature>
<feature type="active site" evidence="1">
    <location>
        <position position="200"/>
    </location>
</feature>
<feature type="binding site" evidence="1">
    <location>
        <position position="118"/>
    </location>
    <ligand>
        <name>S-adenosyl-L-methionine</name>
        <dbReference type="ChEBI" id="CHEBI:59789"/>
    </ligand>
</feature>
<feature type="binding site" evidence="1">
    <location>
        <begin position="141"/>
        <end position="142"/>
    </location>
    <ligand>
        <name>S-adenosyl-L-methionine</name>
        <dbReference type="ChEBI" id="CHEBI:59789"/>
    </ligand>
</feature>
<feature type="binding site" evidence="1">
    <location>
        <begin position="177"/>
        <end position="178"/>
    </location>
    <ligand>
        <name>S-adenosyl-L-methionine</name>
        <dbReference type="ChEBI" id="CHEBI:59789"/>
    </ligand>
</feature>
<feature type="binding site" evidence="1">
    <location>
        <position position="197"/>
    </location>
    <ligand>
        <name>S-adenosyl-L-methionine</name>
        <dbReference type="ChEBI" id="CHEBI:59789"/>
    </ligand>
</feature>
<feature type="binding site" evidence="1">
    <location>
        <begin position="275"/>
        <end position="277"/>
    </location>
    <ligand>
        <name>S-adenosyl-L-methionine</name>
        <dbReference type="ChEBI" id="CHEBI:59789"/>
    </ligand>
</feature>
<dbReference type="EC" id="2.1.1.33" evidence="1"/>
<dbReference type="EMBL" id="CP000497">
    <property type="protein sequence ID" value="ABN65855.1"/>
    <property type="molecule type" value="Genomic_DNA"/>
</dbReference>
<dbReference type="RefSeq" id="XP_001383884.1">
    <property type="nucleotide sequence ID" value="XM_001383847.1"/>
</dbReference>
<dbReference type="SMR" id="A3LS77"/>
<dbReference type="FunCoup" id="A3LS77">
    <property type="interactions" value="558"/>
</dbReference>
<dbReference type="STRING" id="322104.A3LS77"/>
<dbReference type="GeneID" id="4837797"/>
<dbReference type="KEGG" id="pic:PICST_56862"/>
<dbReference type="eggNOG" id="KOG3115">
    <property type="taxonomic scope" value="Eukaryota"/>
</dbReference>
<dbReference type="HOGENOM" id="CLU_050910_3_1_1"/>
<dbReference type="InParanoid" id="A3LS77"/>
<dbReference type="OMA" id="LPNYFAK"/>
<dbReference type="OrthoDB" id="47276at2759"/>
<dbReference type="UniPathway" id="UPA00989"/>
<dbReference type="Proteomes" id="UP000002258">
    <property type="component" value="Chromosome 3"/>
</dbReference>
<dbReference type="GO" id="GO:0005634">
    <property type="term" value="C:nucleus"/>
    <property type="evidence" value="ECO:0007669"/>
    <property type="project" value="UniProtKB-SubCell"/>
</dbReference>
<dbReference type="GO" id="GO:0106143">
    <property type="term" value="C:tRNA (m7G46) methyltransferase complex"/>
    <property type="evidence" value="ECO:0007669"/>
    <property type="project" value="EnsemblFungi"/>
</dbReference>
<dbReference type="GO" id="GO:0008176">
    <property type="term" value="F:tRNA (guanine(46)-N7)-methyltransferase activity"/>
    <property type="evidence" value="ECO:0007669"/>
    <property type="project" value="UniProtKB-UniRule"/>
</dbReference>
<dbReference type="GO" id="GO:0000049">
    <property type="term" value="F:tRNA binding"/>
    <property type="evidence" value="ECO:0007669"/>
    <property type="project" value="UniProtKB-UniRule"/>
</dbReference>
<dbReference type="CDD" id="cd02440">
    <property type="entry name" value="AdoMet_MTases"/>
    <property type="match status" value="1"/>
</dbReference>
<dbReference type="FunFam" id="3.40.50.150:FF:000060">
    <property type="entry name" value="tRNA (guanine-N(7)-)-methyltransferase"/>
    <property type="match status" value="1"/>
</dbReference>
<dbReference type="Gene3D" id="3.40.50.150">
    <property type="entry name" value="Vaccinia Virus protein VP39"/>
    <property type="match status" value="1"/>
</dbReference>
<dbReference type="HAMAP" id="MF_03055">
    <property type="entry name" value="tRNA_methyltr_TrmB_euk"/>
    <property type="match status" value="1"/>
</dbReference>
<dbReference type="InterPro" id="IPR029063">
    <property type="entry name" value="SAM-dependent_MTases_sf"/>
</dbReference>
<dbReference type="InterPro" id="IPR025763">
    <property type="entry name" value="Trm8_euk"/>
</dbReference>
<dbReference type="InterPro" id="IPR003358">
    <property type="entry name" value="tRNA_(Gua-N-7)_MeTrfase_Trmb"/>
</dbReference>
<dbReference type="NCBIfam" id="TIGR00091">
    <property type="entry name" value="tRNA (guanosine(46)-N7)-methyltransferase TrmB"/>
    <property type="match status" value="1"/>
</dbReference>
<dbReference type="PANTHER" id="PTHR23417">
    <property type="entry name" value="3-DEOXY-D-MANNO-OCTULOSONIC-ACID TRANSFERASE/TRNA GUANINE-N 7 - -METHYLTRANSFERASE"/>
    <property type="match status" value="1"/>
</dbReference>
<dbReference type="PANTHER" id="PTHR23417:SF16">
    <property type="entry name" value="TRNA (GUANINE-N(7)-)-METHYLTRANSFERASE"/>
    <property type="match status" value="1"/>
</dbReference>
<dbReference type="Pfam" id="PF02390">
    <property type="entry name" value="Methyltransf_4"/>
    <property type="match status" value="1"/>
</dbReference>
<dbReference type="SUPFAM" id="SSF53335">
    <property type="entry name" value="S-adenosyl-L-methionine-dependent methyltransferases"/>
    <property type="match status" value="1"/>
</dbReference>
<dbReference type="PROSITE" id="PS51625">
    <property type="entry name" value="SAM_MT_TRMB"/>
    <property type="match status" value="1"/>
</dbReference>
<gene>
    <name evidence="1" type="primary">TRM8</name>
    <name type="ORF">PICST_56862</name>
</gene>
<evidence type="ECO:0000255" key="1">
    <source>
        <dbReference type="HAMAP-Rule" id="MF_03055"/>
    </source>
</evidence>
<evidence type="ECO:0000256" key="2">
    <source>
        <dbReference type="SAM" id="MobiDB-lite"/>
    </source>
</evidence>
<comment type="function">
    <text evidence="1">Catalyzes the formation of N(7)-methylguanine at position 46 (m7G46) in tRNA.</text>
</comment>
<comment type="catalytic activity">
    <reaction evidence="1">
        <text>guanosine(46) in tRNA + S-adenosyl-L-methionine = N(7)-methylguanosine(46) in tRNA + S-adenosyl-L-homocysteine</text>
        <dbReference type="Rhea" id="RHEA:42708"/>
        <dbReference type="Rhea" id="RHEA-COMP:10188"/>
        <dbReference type="Rhea" id="RHEA-COMP:10189"/>
        <dbReference type="ChEBI" id="CHEBI:57856"/>
        <dbReference type="ChEBI" id="CHEBI:59789"/>
        <dbReference type="ChEBI" id="CHEBI:74269"/>
        <dbReference type="ChEBI" id="CHEBI:74480"/>
        <dbReference type="EC" id="2.1.1.33"/>
    </reaction>
</comment>
<comment type="pathway">
    <text evidence="1">tRNA modification; N(7)-methylguanine-tRNA biosynthesis.</text>
</comment>
<comment type="subunit">
    <text evidence="1">Forms a complex with TRM82.</text>
</comment>
<comment type="subcellular location">
    <subcellularLocation>
        <location evidence="1">Nucleus</location>
    </subcellularLocation>
</comment>
<comment type="similarity">
    <text evidence="1">Belongs to the class I-like SAM-binding methyltransferase superfamily. TrmB family.</text>
</comment>